<gene>
    <name evidence="1" type="primary">hemA</name>
    <name type="ordered locus">NT01EI_1563</name>
</gene>
<organism>
    <name type="scientific">Edwardsiella ictaluri (strain 93-146)</name>
    <dbReference type="NCBI Taxonomy" id="634503"/>
    <lineage>
        <taxon>Bacteria</taxon>
        <taxon>Pseudomonadati</taxon>
        <taxon>Pseudomonadota</taxon>
        <taxon>Gammaproteobacteria</taxon>
        <taxon>Enterobacterales</taxon>
        <taxon>Hafniaceae</taxon>
        <taxon>Edwardsiella</taxon>
    </lineage>
</organism>
<sequence>MSLLALGINHKTAPVSLRERVTFSPDTLDRAIESLLRQPSVQAGVVLSTCNRTELYLSVEQRADLRQQIVDWLCSYHQLTPEEVSDSLYWHQDNEAVSHLMRVASGLDSLVLGEPQILGQVKKAFSESQREQALSADLERLFQKTFSVAKRVRTETEIGTSAVSVAFAACTLARQIFESLARLNVLLVGAGETIELVARHLHQHQVQHMMIANRTRERAQSLADEVGAEVIPLADIDARLADADIVISSTASPLPIIGKGMVERALKARRNRPMLLVDIAVPRDIEPEVGDLANAYLYSVDDLHAIIQGNMAQRQEAAVQAEHIVQQECANFMAWLRAQGAVDTIREYRAQAEQRRAEAESEALAALAQGVEAEAVIRRLAHRLTNRLIHAPTKSLQQAAGSGDAQRLQMLRDSLGLDHN</sequence>
<dbReference type="EC" id="1.2.1.70" evidence="1"/>
<dbReference type="EMBL" id="CP001600">
    <property type="protein sequence ID" value="ACR68749.1"/>
    <property type="molecule type" value="Genomic_DNA"/>
</dbReference>
<dbReference type="RefSeq" id="WP_015870907.1">
    <property type="nucleotide sequence ID" value="NZ_CP169062.1"/>
</dbReference>
<dbReference type="SMR" id="C5B813"/>
<dbReference type="GeneID" id="69538541"/>
<dbReference type="KEGG" id="eic:NT01EI_1563"/>
<dbReference type="PATRIC" id="fig|634503.3.peg.1397"/>
<dbReference type="HOGENOM" id="CLU_035113_2_2_6"/>
<dbReference type="OrthoDB" id="110209at2"/>
<dbReference type="UniPathway" id="UPA00251">
    <property type="reaction ID" value="UER00316"/>
</dbReference>
<dbReference type="Proteomes" id="UP000001485">
    <property type="component" value="Chromosome"/>
</dbReference>
<dbReference type="GO" id="GO:0008883">
    <property type="term" value="F:glutamyl-tRNA reductase activity"/>
    <property type="evidence" value="ECO:0007669"/>
    <property type="project" value="UniProtKB-UniRule"/>
</dbReference>
<dbReference type="GO" id="GO:0050661">
    <property type="term" value="F:NADP binding"/>
    <property type="evidence" value="ECO:0007669"/>
    <property type="project" value="InterPro"/>
</dbReference>
<dbReference type="GO" id="GO:0019353">
    <property type="term" value="P:protoporphyrinogen IX biosynthetic process from glutamate"/>
    <property type="evidence" value="ECO:0007669"/>
    <property type="project" value="TreeGrafter"/>
</dbReference>
<dbReference type="CDD" id="cd05213">
    <property type="entry name" value="NAD_bind_Glutamyl_tRNA_reduct"/>
    <property type="match status" value="1"/>
</dbReference>
<dbReference type="FunFam" id="3.30.460.30:FF:000001">
    <property type="entry name" value="Glutamyl-tRNA reductase"/>
    <property type="match status" value="1"/>
</dbReference>
<dbReference type="FunFam" id="3.40.50.720:FF:000031">
    <property type="entry name" value="Glutamyl-tRNA reductase"/>
    <property type="match status" value="1"/>
</dbReference>
<dbReference type="Gene3D" id="3.30.460.30">
    <property type="entry name" value="Glutamyl-tRNA reductase, N-terminal domain"/>
    <property type="match status" value="1"/>
</dbReference>
<dbReference type="Gene3D" id="3.40.50.720">
    <property type="entry name" value="NAD(P)-binding Rossmann-like Domain"/>
    <property type="match status" value="1"/>
</dbReference>
<dbReference type="HAMAP" id="MF_00087">
    <property type="entry name" value="Glu_tRNA_reductase"/>
    <property type="match status" value="1"/>
</dbReference>
<dbReference type="InterPro" id="IPR000343">
    <property type="entry name" value="4pyrrol_synth_GluRdtase"/>
</dbReference>
<dbReference type="InterPro" id="IPR015896">
    <property type="entry name" value="4pyrrol_synth_GluRdtase_dimer"/>
</dbReference>
<dbReference type="InterPro" id="IPR015895">
    <property type="entry name" value="4pyrrol_synth_GluRdtase_N"/>
</dbReference>
<dbReference type="InterPro" id="IPR018214">
    <property type="entry name" value="GluRdtase_CS"/>
</dbReference>
<dbReference type="InterPro" id="IPR036453">
    <property type="entry name" value="GluRdtase_dimer_dom_sf"/>
</dbReference>
<dbReference type="InterPro" id="IPR036343">
    <property type="entry name" value="GluRdtase_N_sf"/>
</dbReference>
<dbReference type="InterPro" id="IPR036291">
    <property type="entry name" value="NAD(P)-bd_dom_sf"/>
</dbReference>
<dbReference type="InterPro" id="IPR006151">
    <property type="entry name" value="Shikm_DH/Glu-tRNA_Rdtase"/>
</dbReference>
<dbReference type="NCBIfam" id="TIGR01035">
    <property type="entry name" value="hemA"/>
    <property type="match status" value="1"/>
</dbReference>
<dbReference type="PANTHER" id="PTHR43013">
    <property type="entry name" value="GLUTAMYL-TRNA REDUCTASE"/>
    <property type="match status" value="1"/>
</dbReference>
<dbReference type="PANTHER" id="PTHR43013:SF1">
    <property type="entry name" value="GLUTAMYL-TRNA REDUCTASE"/>
    <property type="match status" value="1"/>
</dbReference>
<dbReference type="Pfam" id="PF00745">
    <property type="entry name" value="GlutR_dimer"/>
    <property type="match status" value="1"/>
</dbReference>
<dbReference type="Pfam" id="PF05201">
    <property type="entry name" value="GlutR_N"/>
    <property type="match status" value="1"/>
</dbReference>
<dbReference type="Pfam" id="PF01488">
    <property type="entry name" value="Shikimate_DH"/>
    <property type="match status" value="1"/>
</dbReference>
<dbReference type="PIRSF" id="PIRSF000445">
    <property type="entry name" value="4pyrrol_synth_GluRdtase"/>
    <property type="match status" value="1"/>
</dbReference>
<dbReference type="SUPFAM" id="SSF69742">
    <property type="entry name" value="Glutamyl tRNA-reductase catalytic, N-terminal domain"/>
    <property type="match status" value="1"/>
</dbReference>
<dbReference type="SUPFAM" id="SSF69075">
    <property type="entry name" value="Glutamyl tRNA-reductase dimerization domain"/>
    <property type="match status" value="1"/>
</dbReference>
<dbReference type="SUPFAM" id="SSF51735">
    <property type="entry name" value="NAD(P)-binding Rossmann-fold domains"/>
    <property type="match status" value="1"/>
</dbReference>
<dbReference type="PROSITE" id="PS00747">
    <property type="entry name" value="GLUTR"/>
    <property type="match status" value="1"/>
</dbReference>
<comment type="function">
    <text evidence="1">Catalyzes the NADPH-dependent reduction of glutamyl-tRNA(Glu) to glutamate 1-semialdehyde (GSA).</text>
</comment>
<comment type="catalytic activity">
    <reaction evidence="1">
        <text>(S)-4-amino-5-oxopentanoate + tRNA(Glu) + NADP(+) = L-glutamyl-tRNA(Glu) + NADPH + H(+)</text>
        <dbReference type="Rhea" id="RHEA:12344"/>
        <dbReference type="Rhea" id="RHEA-COMP:9663"/>
        <dbReference type="Rhea" id="RHEA-COMP:9680"/>
        <dbReference type="ChEBI" id="CHEBI:15378"/>
        <dbReference type="ChEBI" id="CHEBI:57501"/>
        <dbReference type="ChEBI" id="CHEBI:57783"/>
        <dbReference type="ChEBI" id="CHEBI:58349"/>
        <dbReference type="ChEBI" id="CHEBI:78442"/>
        <dbReference type="ChEBI" id="CHEBI:78520"/>
        <dbReference type="EC" id="1.2.1.70"/>
    </reaction>
</comment>
<comment type="pathway">
    <text evidence="1">Porphyrin-containing compound metabolism; protoporphyrin-IX biosynthesis; 5-aminolevulinate from L-glutamyl-tRNA(Glu): step 1/2.</text>
</comment>
<comment type="subunit">
    <text evidence="1">Homodimer.</text>
</comment>
<comment type="domain">
    <text evidence="1">Possesses an unusual extended V-shaped dimeric structure with each monomer consisting of three distinct domains arranged along a curved 'spinal' alpha-helix. The N-terminal catalytic domain specifically recognizes the glutamate moiety of the substrate. The second domain is the NADPH-binding domain, and the third C-terminal domain is responsible for dimerization.</text>
</comment>
<comment type="miscellaneous">
    <text evidence="1">During catalysis, the active site Cys acts as a nucleophile attacking the alpha-carbonyl group of tRNA-bound glutamate with the formation of a thioester intermediate between enzyme and glutamate, and the concomitant release of tRNA(Glu). The thioester intermediate is finally reduced by direct hydride transfer from NADPH, to form the product GSA.</text>
</comment>
<comment type="similarity">
    <text evidence="1">Belongs to the glutamyl-tRNA reductase family.</text>
</comment>
<name>HEM1_EDWI9</name>
<evidence type="ECO:0000255" key="1">
    <source>
        <dbReference type="HAMAP-Rule" id="MF_00087"/>
    </source>
</evidence>
<keyword id="KW-0521">NADP</keyword>
<keyword id="KW-0560">Oxidoreductase</keyword>
<keyword id="KW-0627">Porphyrin biosynthesis</keyword>
<protein>
    <recommendedName>
        <fullName evidence="1">Glutamyl-tRNA reductase</fullName>
        <shortName evidence="1">GluTR</shortName>
        <ecNumber evidence="1">1.2.1.70</ecNumber>
    </recommendedName>
</protein>
<reference key="1">
    <citation type="submission" date="2009-03" db="EMBL/GenBank/DDBJ databases">
        <title>Complete genome sequence of Edwardsiella ictaluri 93-146.</title>
        <authorList>
            <person name="Williams M.L."/>
            <person name="Gillaspy A.F."/>
            <person name="Dyer D.W."/>
            <person name="Thune R.L."/>
            <person name="Waldbieser G.C."/>
            <person name="Schuster S.C."/>
            <person name="Gipson J."/>
            <person name="Zaitshik J."/>
            <person name="Landry C."/>
            <person name="Lawrence M.L."/>
        </authorList>
    </citation>
    <scope>NUCLEOTIDE SEQUENCE [LARGE SCALE GENOMIC DNA]</scope>
    <source>
        <strain>93-146</strain>
    </source>
</reference>
<accession>C5B813</accession>
<feature type="chain" id="PRO_1000202634" description="Glutamyl-tRNA reductase">
    <location>
        <begin position="1"/>
        <end position="420"/>
    </location>
</feature>
<feature type="active site" description="Nucleophile" evidence="1">
    <location>
        <position position="50"/>
    </location>
</feature>
<feature type="binding site" evidence="1">
    <location>
        <begin position="49"/>
        <end position="52"/>
    </location>
    <ligand>
        <name>substrate</name>
    </ligand>
</feature>
<feature type="binding site" evidence="1">
    <location>
        <position position="109"/>
    </location>
    <ligand>
        <name>substrate</name>
    </ligand>
</feature>
<feature type="binding site" evidence="1">
    <location>
        <begin position="114"/>
        <end position="116"/>
    </location>
    <ligand>
        <name>substrate</name>
    </ligand>
</feature>
<feature type="binding site" evidence="1">
    <location>
        <position position="120"/>
    </location>
    <ligand>
        <name>substrate</name>
    </ligand>
</feature>
<feature type="binding site" evidence="1">
    <location>
        <begin position="189"/>
        <end position="194"/>
    </location>
    <ligand>
        <name>NADP(+)</name>
        <dbReference type="ChEBI" id="CHEBI:58349"/>
    </ligand>
</feature>
<feature type="site" description="Important for activity" evidence="1">
    <location>
        <position position="99"/>
    </location>
</feature>
<proteinExistence type="inferred from homology"/>